<reference key="1">
    <citation type="submission" date="2000-05" db="EMBL/GenBank/DDBJ databases">
        <title>Identification of dopamine responsive genes in glial cells by subtractive hybridization.</title>
        <authorList>
            <person name="Shi J."/>
            <person name="Cai W."/>
            <person name="Xie Y."/>
        </authorList>
    </citation>
    <scope>NUCLEOTIDE SEQUENCE [MRNA] (ISOFORM 1)</scope>
</reference>
<reference key="2">
    <citation type="submission" date="1998-04" db="EMBL/GenBank/DDBJ databases">
        <authorList>
            <person name="Mao Y.M."/>
            <person name="Xie Y."/>
            <person name="Zheng Z.H."/>
            <person name="Gu S.H."/>
            <person name="Ying K."/>
            <person name="Lin Q."/>
            <person name="Dai J.L."/>
            <person name="Tang R."/>
            <person name="Dong H."/>
            <person name="Wu X.Z."/>
        </authorList>
    </citation>
    <scope>NUCLEOTIDE SEQUENCE [LARGE SCALE MRNA] (ISOFORM 1)</scope>
    <source>
        <tissue>Fetal brain</tissue>
    </source>
</reference>
<reference key="3">
    <citation type="journal article" date="2000" name="Genome Res.">
        <title>Cloning and functional analysis of cDNAs with open reading frames for 300 previously undefined genes expressed in CD34+ hematopoietic stem/progenitor cells.</title>
        <authorList>
            <person name="Zhang Q.-H."/>
            <person name="Ye M."/>
            <person name="Wu X.-Y."/>
            <person name="Ren S.-X."/>
            <person name="Zhao M."/>
            <person name="Zhao C.-J."/>
            <person name="Fu G."/>
            <person name="Shen Y."/>
            <person name="Fan H.-Y."/>
            <person name="Lu G."/>
            <person name="Zhong M."/>
            <person name="Xu X.-R."/>
            <person name="Han Z.-G."/>
            <person name="Zhang J.-W."/>
            <person name="Tao J."/>
            <person name="Huang Q.-H."/>
            <person name="Zhou J."/>
            <person name="Hu G.-X."/>
            <person name="Gu J."/>
            <person name="Chen S.-J."/>
            <person name="Chen Z."/>
        </authorList>
    </citation>
    <scope>NUCLEOTIDE SEQUENCE [LARGE SCALE MRNA] (ISOFORM 1)</scope>
    <source>
        <tissue>Umbilical cord blood</tissue>
    </source>
</reference>
<reference key="4">
    <citation type="journal article" date="2001" name="Genome Res.">
        <title>Towards a catalog of human genes and proteins: sequencing and analysis of 500 novel complete protein coding human cDNAs.</title>
        <authorList>
            <person name="Wiemann S."/>
            <person name="Weil B."/>
            <person name="Wellenreuther R."/>
            <person name="Gassenhuber J."/>
            <person name="Glassl S."/>
            <person name="Ansorge W."/>
            <person name="Boecher M."/>
            <person name="Bloecker H."/>
            <person name="Bauersachs S."/>
            <person name="Blum H."/>
            <person name="Lauber J."/>
            <person name="Duesterhoeft A."/>
            <person name="Beyer A."/>
            <person name="Koehrer K."/>
            <person name="Strack N."/>
            <person name="Mewes H.-W."/>
            <person name="Ottenwaelder B."/>
            <person name="Obermaier B."/>
            <person name="Tampe J."/>
            <person name="Heubner D."/>
            <person name="Wambutt R."/>
            <person name="Korn B."/>
            <person name="Klein M."/>
            <person name="Poustka A."/>
        </authorList>
    </citation>
    <scope>NUCLEOTIDE SEQUENCE [LARGE SCALE MRNA] (ISOFORM 1)</scope>
    <source>
        <tissue>Brain</tissue>
    </source>
</reference>
<reference key="5">
    <citation type="journal article" date="2004" name="Nat. Genet.">
        <title>Complete sequencing and characterization of 21,243 full-length human cDNAs.</title>
        <authorList>
            <person name="Ota T."/>
            <person name="Suzuki Y."/>
            <person name="Nishikawa T."/>
            <person name="Otsuki T."/>
            <person name="Sugiyama T."/>
            <person name="Irie R."/>
            <person name="Wakamatsu A."/>
            <person name="Hayashi K."/>
            <person name="Sato H."/>
            <person name="Nagai K."/>
            <person name="Kimura K."/>
            <person name="Makita H."/>
            <person name="Sekine M."/>
            <person name="Obayashi M."/>
            <person name="Nishi T."/>
            <person name="Shibahara T."/>
            <person name="Tanaka T."/>
            <person name="Ishii S."/>
            <person name="Yamamoto J."/>
            <person name="Saito K."/>
            <person name="Kawai Y."/>
            <person name="Isono Y."/>
            <person name="Nakamura Y."/>
            <person name="Nagahari K."/>
            <person name="Murakami K."/>
            <person name="Yasuda T."/>
            <person name="Iwayanagi T."/>
            <person name="Wagatsuma M."/>
            <person name="Shiratori A."/>
            <person name="Sudo H."/>
            <person name="Hosoiri T."/>
            <person name="Kaku Y."/>
            <person name="Kodaira H."/>
            <person name="Kondo H."/>
            <person name="Sugawara M."/>
            <person name="Takahashi M."/>
            <person name="Kanda K."/>
            <person name="Yokoi T."/>
            <person name="Furuya T."/>
            <person name="Kikkawa E."/>
            <person name="Omura Y."/>
            <person name="Abe K."/>
            <person name="Kamihara K."/>
            <person name="Katsuta N."/>
            <person name="Sato K."/>
            <person name="Tanikawa M."/>
            <person name="Yamazaki M."/>
            <person name="Ninomiya K."/>
            <person name="Ishibashi T."/>
            <person name="Yamashita H."/>
            <person name="Murakawa K."/>
            <person name="Fujimori K."/>
            <person name="Tanai H."/>
            <person name="Kimata M."/>
            <person name="Watanabe M."/>
            <person name="Hiraoka S."/>
            <person name="Chiba Y."/>
            <person name="Ishida S."/>
            <person name="Ono Y."/>
            <person name="Takiguchi S."/>
            <person name="Watanabe S."/>
            <person name="Yosida M."/>
            <person name="Hotuta T."/>
            <person name="Kusano J."/>
            <person name="Kanehori K."/>
            <person name="Takahashi-Fujii A."/>
            <person name="Hara H."/>
            <person name="Tanase T.-O."/>
            <person name="Nomura Y."/>
            <person name="Togiya S."/>
            <person name="Komai F."/>
            <person name="Hara R."/>
            <person name="Takeuchi K."/>
            <person name="Arita M."/>
            <person name="Imose N."/>
            <person name="Musashino K."/>
            <person name="Yuuki H."/>
            <person name="Oshima A."/>
            <person name="Sasaki N."/>
            <person name="Aotsuka S."/>
            <person name="Yoshikawa Y."/>
            <person name="Matsunawa H."/>
            <person name="Ichihara T."/>
            <person name="Shiohata N."/>
            <person name="Sano S."/>
            <person name="Moriya S."/>
            <person name="Momiyama H."/>
            <person name="Satoh N."/>
            <person name="Takami S."/>
            <person name="Terashima Y."/>
            <person name="Suzuki O."/>
            <person name="Nakagawa S."/>
            <person name="Senoh A."/>
            <person name="Mizoguchi H."/>
            <person name="Goto Y."/>
            <person name="Shimizu F."/>
            <person name="Wakebe H."/>
            <person name="Hishigaki H."/>
            <person name="Watanabe T."/>
            <person name="Sugiyama A."/>
            <person name="Takemoto M."/>
            <person name="Kawakami B."/>
            <person name="Yamazaki M."/>
            <person name="Watanabe K."/>
            <person name="Kumagai A."/>
            <person name="Itakura S."/>
            <person name="Fukuzumi Y."/>
            <person name="Fujimori Y."/>
            <person name="Komiyama M."/>
            <person name="Tashiro H."/>
            <person name="Tanigami A."/>
            <person name="Fujiwara T."/>
            <person name="Ono T."/>
            <person name="Yamada K."/>
            <person name="Fujii Y."/>
            <person name="Ozaki K."/>
            <person name="Hirao M."/>
            <person name="Ohmori Y."/>
            <person name="Kawabata A."/>
            <person name="Hikiji T."/>
            <person name="Kobatake N."/>
            <person name="Inagaki H."/>
            <person name="Ikema Y."/>
            <person name="Okamoto S."/>
            <person name="Okitani R."/>
            <person name="Kawakami T."/>
            <person name="Noguchi S."/>
            <person name="Itoh T."/>
            <person name="Shigeta K."/>
            <person name="Senba T."/>
            <person name="Matsumura K."/>
            <person name="Nakajima Y."/>
            <person name="Mizuno T."/>
            <person name="Morinaga M."/>
            <person name="Sasaki M."/>
            <person name="Togashi T."/>
            <person name="Oyama M."/>
            <person name="Hata H."/>
            <person name="Watanabe M."/>
            <person name="Komatsu T."/>
            <person name="Mizushima-Sugano J."/>
            <person name="Satoh T."/>
            <person name="Shirai Y."/>
            <person name="Takahashi Y."/>
            <person name="Nakagawa K."/>
            <person name="Okumura K."/>
            <person name="Nagase T."/>
            <person name="Nomura N."/>
            <person name="Kikuchi H."/>
            <person name="Masuho Y."/>
            <person name="Yamashita R."/>
            <person name="Nakai K."/>
            <person name="Yada T."/>
            <person name="Nakamura Y."/>
            <person name="Ohara O."/>
            <person name="Isogai T."/>
            <person name="Sugano S."/>
        </authorList>
    </citation>
    <scope>NUCLEOTIDE SEQUENCE [LARGE SCALE MRNA] (ISOFORMS 1 AND 2)</scope>
    <source>
        <tissue>Colon</tissue>
        <tissue>Synovial cell</tissue>
    </source>
</reference>
<reference key="6">
    <citation type="submission" date="2004-06" db="EMBL/GenBank/DDBJ databases">
        <title>Cloning of human full open reading frames in Gateway(TM) system entry vector (pDONR201).</title>
        <authorList>
            <person name="Ebert L."/>
            <person name="Schick M."/>
            <person name="Neubert P."/>
            <person name="Schatten R."/>
            <person name="Henze S."/>
            <person name="Korn B."/>
        </authorList>
    </citation>
    <scope>NUCLEOTIDE SEQUENCE [LARGE SCALE MRNA] (ISOFORM 1)</scope>
</reference>
<reference key="7">
    <citation type="journal article" date="2003" name="Nature">
        <title>The DNA sequence and analysis of human chromosome 6.</title>
        <authorList>
            <person name="Mungall A.J."/>
            <person name="Palmer S.A."/>
            <person name="Sims S.K."/>
            <person name="Edwards C.A."/>
            <person name="Ashurst J.L."/>
            <person name="Wilming L."/>
            <person name="Jones M.C."/>
            <person name="Horton R."/>
            <person name="Hunt S.E."/>
            <person name="Scott C.E."/>
            <person name="Gilbert J.G.R."/>
            <person name="Clamp M.E."/>
            <person name="Bethel G."/>
            <person name="Milne S."/>
            <person name="Ainscough R."/>
            <person name="Almeida J.P."/>
            <person name="Ambrose K.D."/>
            <person name="Andrews T.D."/>
            <person name="Ashwell R.I.S."/>
            <person name="Babbage A.K."/>
            <person name="Bagguley C.L."/>
            <person name="Bailey J."/>
            <person name="Banerjee R."/>
            <person name="Barker D.J."/>
            <person name="Barlow K.F."/>
            <person name="Bates K."/>
            <person name="Beare D.M."/>
            <person name="Beasley H."/>
            <person name="Beasley O."/>
            <person name="Bird C.P."/>
            <person name="Blakey S.E."/>
            <person name="Bray-Allen S."/>
            <person name="Brook J."/>
            <person name="Brown A.J."/>
            <person name="Brown J.Y."/>
            <person name="Burford D.C."/>
            <person name="Burrill W."/>
            <person name="Burton J."/>
            <person name="Carder C."/>
            <person name="Carter N.P."/>
            <person name="Chapman J.C."/>
            <person name="Clark S.Y."/>
            <person name="Clark G."/>
            <person name="Clee C.M."/>
            <person name="Clegg S."/>
            <person name="Cobley V."/>
            <person name="Collier R.E."/>
            <person name="Collins J.E."/>
            <person name="Colman L.K."/>
            <person name="Corby N.R."/>
            <person name="Coville G.J."/>
            <person name="Culley K.M."/>
            <person name="Dhami P."/>
            <person name="Davies J."/>
            <person name="Dunn M."/>
            <person name="Earthrowl M.E."/>
            <person name="Ellington A.E."/>
            <person name="Evans K.A."/>
            <person name="Faulkner L."/>
            <person name="Francis M.D."/>
            <person name="Frankish A."/>
            <person name="Frankland J."/>
            <person name="French L."/>
            <person name="Garner P."/>
            <person name="Garnett J."/>
            <person name="Ghori M.J."/>
            <person name="Gilby L.M."/>
            <person name="Gillson C.J."/>
            <person name="Glithero R.J."/>
            <person name="Grafham D.V."/>
            <person name="Grant M."/>
            <person name="Gribble S."/>
            <person name="Griffiths C."/>
            <person name="Griffiths M.N.D."/>
            <person name="Hall R."/>
            <person name="Halls K.S."/>
            <person name="Hammond S."/>
            <person name="Harley J.L."/>
            <person name="Hart E.A."/>
            <person name="Heath P.D."/>
            <person name="Heathcott R."/>
            <person name="Holmes S.J."/>
            <person name="Howden P.J."/>
            <person name="Howe K.L."/>
            <person name="Howell G.R."/>
            <person name="Huckle E."/>
            <person name="Humphray S.J."/>
            <person name="Humphries M.D."/>
            <person name="Hunt A.R."/>
            <person name="Johnson C.M."/>
            <person name="Joy A.A."/>
            <person name="Kay M."/>
            <person name="Keenan S.J."/>
            <person name="Kimberley A.M."/>
            <person name="King A."/>
            <person name="Laird G.K."/>
            <person name="Langford C."/>
            <person name="Lawlor S."/>
            <person name="Leongamornlert D.A."/>
            <person name="Leversha M."/>
            <person name="Lloyd C.R."/>
            <person name="Lloyd D.M."/>
            <person name="Loveland J.E."/>
            <person name="Lovell J."/>
            <person name="Martin S."/>
            <person name="Mashreghi-Mohammadi M."/>
            <person name="Maslen G.L."/>
            <person name="Matthews L."/>
            <person name="McCann O.T."/>
            <person name="McLaren S.J."/>
            <person name="McLay K."/>
            <person name="McMurray A."/>
            <person name="Moore M.J.F."/>
            <person name="Mullikin J.C."/>
            <person name="Niblett D."/>
            <person name="Nickerson T."/>
            <person name="Novik K.L."/>
            <person name="Oliver K."/>
            <person name="Overton-Larty E.K."/>
            <person name="Parker A."/>
            <person name="Patel R."/>
            <person name="Pearce A.V."/>
            <person name="Peck A.I."/>
            <person name="Phillimore B.J.C.T."/>
            <person name="Phillips S."/>
            <person name="Plumb R.W."/>
            <person name="Porter K.M."/>
            <person name="Ramsey Y."/>
            <person name="Ranby S.A."/>
            <person name="Rice C.M."/>
            <person name="Ross M.T."/>
            <person name="Searle S.M."/>
            <person name="Sehra H.K."/>
            <person name="Sheridan E."/>
            <person name="Skuce C.D."/>
            <person name="Smith S."/>
            <person name="Smith M."/>
            <person name="Spraggon L."/>
            <person name="Squares S.L."/>
            <person name="Steward C.A."/>
            <person name="Sycamore N."/>
            <person name="Tamlyn-Hall G."/>
            <person name="Tester J."/>
            <person name="Theaker A.J."/>
            <person name="Thomas D.W."/>
            <person name="Thorpe A."/>
            <person name="Tracey A."/>
            <person name="Tromans A."/>
            <person name="Tubby B."/>
            <person name="Wall M."/>
            <person name="Wallis J.M."/>
            <person name="West A.P."/>
            <person name="White S.S."/>
            <person name="Whitehead S.L."/>
            <person name="Whittaker H."/>
            <person name="Wild A."/>
            <person name="Willey D.J."/>
            <person name="Wilmer T.E."/>
            <person name="Wood J.M."/>
            <person name="Wray P.W."/>
            <person name="Wyatt J.C."/>
            <person name="Young L."/>
            <person name="Younger R.M."/>
            <person name="Bentley D.R."/>
            <person name="Coulson A."/>
            <person name="Durbin R.M."/>
            <person name="Hubbard T."/>
            <person name="Sulston J.E."/>
            <person name="Dunham I."/>
            <person name="Rogers J."/>
            <person name="Beck S."/>
        </authorList>
    </citation>
    <scope>NUCLEOTIDE SEQUENCE [LARGE SCALE GENOMIC DNA]</scope>
</reference>
<reference key="8">
    <citation type="submission" date="2005-09" db="EMBL/GenBank/DDBJ databases">
        <authorList>
            <person name="Mural R.J."/>
            <person name="Istrail S."/>
            <person name="Sutton G.G."/>
            <person name="Florea L."/>
            <person name="Halpern A.L."/>
            <person name="Mobarry C.M."/>
            <person name="Lippert R."/>
            <person name="Walenz B."/>
            <person name="Shatkay H."/>
            <person name="Dew I."/>
            <person name="Miller J.R."/>
            <person name="Flanigan M.J."/>
            <person name="Edwards N.J."/>
            <person name="Bolanos R."/>
            <person name="Fasulo D."/>
            <person name="Halldorsson B.V."/>
            <person name="Hannenhalli S."/>
            <person name="Turner R."/>
            <person name="Yooseph S."/>
            <person name="Lu F."/>
            <person name="Nusskern D.R."/>
            <person name="Shue B.C."/>
            <person name="Zheng X.H."/>
            <person name="Zhong F."/>
            <person name="Delcher A.L."/>
            <person name="Huson D.H."/>
            <person name="Kravitz S.A."/>
            <person name="Mouchard L."/>
            <person name="Reinert K."/>
            <person name="Remington K.A."/>
            <person name="Clark A.G."/>
            <person name="Waterman M.S."/>
            <person name="Eichler E.E."/>
            <person name="Adams M.D."/>
            <person name="Hunkapiller M.W."/>
            <person name="Myers E.W."/>
            <person name="Venter J.C."/>
        </authorList>
    </citation>
    <scope>NUCLEOTIDE SEQUENCE [LARGE SCALE GENOMIC DNA]</scope>
</reference>
<reference key="9">
    <citation type="journal article" date="2004" name="Genome Res.">
        <title>The status, quality, and expansion of the NIH full-length cDNA project: the Mammalian Gene Collection (MGC).</title>
        <authorList>
            <consortium name="The MGC Project Team"/>
        </authorList>
    </citation>
    <scope>NUCLEOTIDE SEQUENCE [LARGE SCALE MRNA] (ISOFORM 1)</scope>
    <source>
        <tissue>Brain</tissue>
        <tissue>Urinary bladder</tissue>
    </source>
</reference>
<reference key="10">
    <citation type="submission" date="2008-10" db="UniProtKB">
        <authorList>
            <person name="Bienvenut W.V."/>
            <person name="Zebisch A."/>
            <person name="Kolch W."/>
        </authorList>
    </citation>
    <scope>PROTEIN SEQUENCE OF 2-15 AND 30-39</scope>
    <scope>CLEAVAGE OF INITIATOR METHIONINE</scope>
    <scope>ACETYLATION AT ALA-2</scope>
    <scope>IDENTIFICATION BY MASS SPECTROMETRY</scope>
    <source>
        <tissue>Colon carcinoma</tissue>
    </source>
</reference>
<reference key="11">
    <citation type="journal article" date="2005" name="J. Biol. Chem.">
        <title>The role of LIP5 and CHMP5 in multivesicular body formation and HIV-1 budding in mammalian cells.</title>
        <authorList>
            <person name="Ward D.M."/>
            <person name="Vaughn M.B."/>
            <person name="Shiflett S.L."/>
            <person name="White P.L."/>
            <person name="Pollock A.L."/>
            <person name="Hill J."/>
            <person name="Schnegelberger R."/>
            <person name="Sundquist W.I."/>
            <person name="Kaplan J."/>
        </authorList>
    </citation>
    <scope>FUNCTION</scope>
    <scope>SUBCELLULAR LOCATION</scope>
    <scope>INTERACTION WITH CHMP5</scope>
</reference>
<reference key="12">
    <citation type="journal article" date="2007" name="J. Biol. Chem.">
        <title>Targeting of AMSH to endosomes is required for epidermal growth factor receptor degradation.</title>
        <authorList>
            <person name="Ma Y.M."/>
            <person name="Boucrot E."/>
            <person name="Villen J."/>
            <person name="Affar el B."/>
            <person name="Gygi S.P."/>
            <person name="Goettlinger H.G."/>
            <person name="Kirchhausen T."/>
        </authorList>
    </citation>
    <scope>INTERACTION WITH CHMP5</scope>
</reference>
<reference key="13">
    <citation type="journal article" date="2008" name="Mol. Biol. Cell">
        <title>Novel interactions of ESCRT-III with LIP5 and VPS4 and their implications for ESCRT-III disassembly.</title>
        <authorList>
            <person name="Shim S."/>
            <person name="Merrill S.A."/>
            <person name="Hanson P.I."/>
        </authorList>
    </citation>
    <scope>INTERACTION WITH CHMP1B; CHMP2A; CHMP3; CHMP5 AND VPS4B</scope>
</reference>
<reference key="14">
    <citation type="journal article" date="2009" name="Anal. Chem.">
        <title>Lys-N and trypsin cover complementary parts of the phosphoproteome in a refined SCX-based approach.</title>
        <authorList>
            <person name="Gauci S."/>
            <person name="Helbig A.O."/>
            <person name="Slijper M."/>
            <person name="Krijgsveld J."/>
            <person name="Heck A.J."/>
            <person name="Mohammed S."/>
        </authorList>
    </citation>
    <scope>ACETYLATION [LARGE SCALE ANALYSIS] AT ALA-2</scope>
    <scope>CLEAVAGE OF INITIATOR METHIONINE [LARGE SCALE ANALYSIS]</scope>
    <scope>IDENTIFICATION BY MASS SPECTROMETRY [LARGE SCALE ANALYSIS]</scope>
</reference>
<reference key="15">
    <citation type="journal article" date="2009" name="Mol. Biol. Cell">
        <title>Essential role of hIST1 in cytokinesis.</title>
        <authorList>
            <person name="Agromayor M."/>
            <person name="Carlton J.G."/>
            <person name="Phelan J.P."/>
            <person name="Matthews D.R."/>
            <person name="Carlin L.M."/>
            <person name="Ameer-Beg S."/>
            <person name="Bowers K."/>
            <person name="Martin-Serrano J."/>
        </authorList>
    </citation>
    <scope>INTERACTION WITH IST1</scope>
</reference>
<reference key="16">
    <citation type="journal article" date="2009" name="Mol. Biol. Cell">
        <title>Biochemical analyses of human IST1 and its function in cytokinesis.</title>
        <authorList>
            <person name="Bajorek M."/>
            <person name="Morita E."/>
            <person name="Skalicky J.J."/>
            <person name="Morham S.G."/>
            <person name="Babst M."/>
            <person name="Sundquist W.I."/>
        </authorList>
    </citation>
    <scope>INTERACTION WITH IST1</scope>
</reference>
<reference key="17">
    <citation type="journal article" date="2011" name="BMC Syst. Biol.">
        <title>Initial characterization of the human central proteome.</title>
        <authorList>
            <person name="Burkard T.R."/>
            <person name="Planyavsky M."/>
            <person name="Kaupe I."/>
            <person name="Breitwieser F.P."/>
            <person name="Buerckstuemmer T."/>
            <person name="Bennett K.L."/>
            <person name="Superti-Furga G."/>
            <person name="Colinge J."/>
        </authorList>
    </citation>
    <scope>IDENTIFICATION BY MASS SPECTROMETRY [LARGE SCALE ANALYSIS]</scope>
</reference>
<reference key="18">
    <citation type="journal article" date="2011" name="J. Virol.">
        <title>Mechanism of inhibition of retrovirus release from cells by interferon-induced gene ISG15.</title>
        <authorList>
            <person name="Kuang Z."/>
            <person name="Seo E.J."/>
            <person name="Leis J."/>
        </authorList>
    </citation>
    <scope>INTERACTION WITH CHMP2A; CHMP3 AND CHMP5</scope>
</reference>
<reference key="19">
    <citation type="journal article" date="2012" name="Mol. Cell. Proteomics">
        <title>Comparative large-scale characterisation of plant vs. mammal proteins reveals similar and idiosyncratic N-alpha acetylation features.</title>
        <authorList>
            <person name="Bienvenut W.V."/>
            <person name="Sumpton D."/>
            <person name="Martinez A."/>
            <person name="Lilla S."/>
            <person name="Espagne C."/>
            <person name="Meinnel T."/>
            <person name="Giglione C."/>
        </authorList>
    </citation>
    <scope>ACETYLATION [LARGE SCALE ANALYSIS] AT ALA-2</scope>
    <scope>CLEAVAGE OF INITIATOR METHIONINE [LARGE SCALE ANALYSIS]</scope>
    <scope>IDENTIFICATION BY MASS SPECTROMETRY [LARGE SCALE ANALYSIS]</scope>
</reference>
<evidence type="ECO:0000250" key="1"/>
<evidence type="ECO:0000256" key="2">
    <source>
        <dbReference type="SAM" id="MobiDB-lite"/>
    </source>
</evidence>
<evidence type="ECO:0000269" key="3">
    <source>
    </source>
</evidence>
<evidence type="ECO:0000269" key="4">
    <source>
    </source>
</evidence>
<evidence type="ECO:0000269" key="5">
    <source>
    </source>
</evidence>
<evidence type="ECO:0000269" key="6">
    <source>
    </source>
</evidence>
<evidence type="ECO:0000269" key="7">
    <source>
    </source>
</evidence>
<evidence type="ECO:0000269" key="8">
    <source>
    </source>
</evidence>
<evidence type="ECO:0000269" key="9">
    <source ref="10"/>
</evidence>
<evidence type="ECO:0000303" key="10">
    <source>
    </source>
</evidence>
<evidence type="ECO:0000305" key="11"/>
<evidence type="ECO:0000305" key="12">
    <source>
    </source>
</evidence>
<evidence type="ECO:0007744" key="13">
    <source>
    </source>
</evidence>
<evidence type="ECO:0007744" key="14">
    <source>
    </source>
</evidence>
<evidence type="ECO:0007829" key="15">
    <source>
        <dbReference type="PDB" id="4TXR"/>
    </source>
</evidence>
<evidence type="ECO:0007829" key="16">
    <source>
        <dbReference type="PDB" id="4U7E"/>
    </source>
</evidence>
<feature type="initiator methionine" description="Removed" evidence="9 13 14">
    <location>
        <position position="1"/>
    </location>
</feature>
<feature type="chain" id="PRO_0000089509" description="Vacuolar protein sorting-associated protein VTA1 homolog">
    <location>
        <begin position="2"/>
        <end position="307"/>
    </location>
</feature>
<feature type="region of interest" description="Interaction with IST1">
    <location>
        <begin position="2"/>
        <end position="186"/>
    </location>
</feature>
<feature type="region of interest" description="Interaction with CHMP5">
    <location>
        <begin position="2"/>
        <end position="75"/>
    </location>
</feature>
<feature type="region of interest" description="Disordered" evidence="2">
    <location>
        <begin position="179"/>
        <end position="233"/>
    </location>
</feature>
<feature type="region of interest" description="Interaction with VPS4B" evidence="1">
    <location>
        <begin position="198"/>
        <end position="307"/>
    </location>
</feature>
<feature type="compositionally biased region" description="Low complexity" evidence="2">
    <location>
        <begin position="181"/>
        <end position="206"/>
    </location>
</feature>
<feature type="modified residue" description="N-acetylalanine" evidence="9 13 14">
    <location>
        <position position="2"/>
    </location>
</feature>
<feature type="splice variant" id="VSP_056727" description="In isoform 2." evidence="10">
    <original>MAALAPLPPLPAQFKSIQHHLRTAQEHDKRDPVVAYYCRLYAMQTGMKIDSKTPECRKFLSKLMDQLEA</original>
    <variation>MTSETLWWLIT</variation>
    <location>
        <begin position="1"/>
        <end position="69"/>
    </location>
</feature>
<feature type="splice variant" id="VSP_056728" description="In isoform 2." evidence="10">
    <location>
        <begin position="234"/>
        <end position="260"/>
    </location>
</feature>
<feature type="sequence variant" id="VAR_053917" description="In dbSNP:rs2232307.">
    <original>I</original>
    <variation>M</variation>
    <location>
        <position position="239"/>
    </location>
</feature>
<feature type="sequence conflict" description="In Ref. 4; CAB66619." evidence="11" ref="4">
    <original>F</original>
    <variation>L</variation>
    <location>
        <position position="14"/>
    </location>
</feature>
<feature type="sequence conflict" description="In Ref. 3; AAF36148." evidence="11" ref="3">
    <original>CL</original>
    <variation>V</variation>
    <location>
        <begin position="155"/>
        <end position="156"/>
    </location>
</feature>
<feature type="sequence conflict" description="In Ref. 5; BAG62917." evidence="11" ref="5">
    <original>A</original>
    <variation>V</variation>
    <location>
        <position position="282"/>
    </location>
</feature>
<feature type="sequence conflict" description="In Ref. 6; CAG33488." evidence="11" ref="6">
    <original>E</original>
    <variation>D</variation>
    <location>
        <position position="307"/>
    </location>
</feature>
<feature type="helix" evidence="16">
    <location>
        <begin position="2"/>
        <end position="4"/>
    </location>
</feature>
<feature type="helix" evidence="15">
    <location>
        <begin position="12"/>
        <end position="17"/>
    </location>
</feature>
<feature type="helix" evidence="15">
    <location>
        <begin position="18"/>
        <end position="26"/>
    </location>
</feature>
<feature type="turn" evidence="15">
    <location>
        <begin position="27"/>
        <end position="30"/>
    </location>
</feature>
<feature type="helix" evidence="15">
    <location>
        <begin position="32"/>
        <end position="49"/>
    </location>
</feature>
<feature type="strand" evidence="15">
    <location>
        <begin position="51"/>
        <end position="53"/>
    </location>
</feature>
<feature type="helix" evidence="15">
    <location>
        <begin position="54"/>
        <end position="73"/>
    </location>
</feature>
<feature type="turn" evidence="15">
    <location>
        <begin position="74"/>
        <end position="76"/>
    </location>
</feature>
<feature type="helix" evidence="15">
    <location>
        <begin position="78"/>
        <end position="81"/>
    </location>
</feature>
<feature type="helix" evidence="15">
    <location>
        <begin position="83"/>
        <end position="106"/>
    </location>
</feature>
<feature type="helix" evidence="15">
    <location>
        <begin position="112"/>
        <end position="128"/>
    </location>
</feature>
<feature type="helix" evidence="15">
    <location>
        <begin position="129"/>
        <end position="131"/>
    </location>
</feature>
<feature type="helix" evidence="15">
    <location>
        <begin position="136"/>
        <end position="158"/>
    </location>
</feature>
<accession>Q9NP79</accession>
<accession>B4DW55</accession>
<accession>E1P594</accession>
<accession>E7ETQ7</accession>
<accession>Q5TGM1</accession>
<accession>Q6IAE8</accession>
<accession>Q9H0R2</accession>
<accession>Q9H3K9</accession>
<accession>Q9P0Q0</accession>
<keyword id="KW-0002">3D-structure</keyword>
<keyword id="KW-0007">Acetylation</keyword>
<keyword id="KW-0025">Alternative splicing</keyword>
<keyword id="KW-0963">Cytoplasm</keyword>
<keyword id="KW-0903">Direct protein sequencing</keyword>
<keyword id="KW-0967">Endosome</keyword>
<keyword id="KW-0472">Membrane</keyword>
<keyword id="KW-0653">Protein transport</keyword>
<keyword id="KW-1267">Proteomics identification</keyword>
<keyword id="KW-1185">Reference proteome</keyword>
<keyword id="KW-0813">Transport</keyword>
<gene>
    <name type="primary">VTA1</name>
    <name type="synonym">C6orf55</name>
    <name type="ORF">HSPC228</name>
    <name type="ORF">My012</name>
</gene>
<proteinExistence type="evidence at protein level"/>
<protein>
    <recommendedName>
        <fullName>Vacuolar protein sorting-associated protein VTA1 homolog</fullName>
    </recommendedName>
    <alternativeName>
        <fullName>Dopamine-responsive gene 1 protein</fullName>
        <shortName>DRG-1</shortName>
    </alternativeName>
    <alternativeName>
        <fullName>LYST-interacting protein 5</fullName>
        <shortName>LIP5</shortName>
    </alternativeName>
    <alternativeName>
        <fullName>SKD1-binding protein 1</fullName>
        <shortName>SBP1</shortName>
    </alternativeName>
</protein>
<comment type="function">
    <text evidence="1 3">Involved in the endosomal multivesicular bodies (MVB) pathway. MVBs contain intraluminal vesicles (ILVs) that are generated by invagination and scission from the limiting membrane of the endosome and mostly are delivered to lysosomes enabling degradation of membrane proteins, such as stimulated growth factor receptors, lysosomal enzymes and lipids. Thought to be a cofactor of VPS4A/B, which catalyzes disassembles membrane-associated ESCRT-III assemblies. Involved in the sorting and down-regulation of EGFR (By similarity). Involved in HIV-1 budding.</text>
</comment>
<comment type="subunit">
    <text evidence="3 4 5 6 7 8">Interacts with VPS4B. Interacts with CHMP1B. Interacts with CHMP2A; the interaction probably involves the open conformation of (polymerized) CHMP2A. Interacts with CHMP3. Interacts with CHMP5; the interaction involves soluble CHMP5. Interacts with IST1.</text>
</comment>
<comment type="interaction">
    <interactant intactId="EBI-740160">
        <id>Q9NP79</id>
    </interactant>
    <interactant intactId="EBI-395261">
        <id>P24863</id>
        <label>CCNC</label>
    </interactant>
    <organismsDiffer>false</organismsDiffer>
    <experiments>3</experiments>
</comment>
<comment type="interaction">
    <interactant intactId="EBI-740160">
        <id>Q9NP79</id>
    </interactant>
    <interactant intactId="EBI-1057156">
        <id>Q9HD42</id>
        <label>CHMP1A</label>
    </interactant>
    <organismsDiffer>false</organismsDiffer>
    <experiments>4</experiments>
</comment>
<comment type="interaction">
    <interactant intactId="EBI-740160">
        <id>Q9NP79</id>
    </interactant>
    <interactant intactId="EBI-2118090">
        <id>Q7LBR1</id>
        <label>CHMP1B</label>
    </interactant>
    <organismsDiffer>false</organismsDiffer>
    <experiments>4</experiments>
</comment>
<comment type="interaction">
    <interactant intactId="EBI-740160">
        <id>Q9NP79</id>
    </interactant>
    <interactant intactId="EBI-751303">
        <id>Q9NZZ3</id>
        <label>CHMP5</label>
    </interactant>
    <organismsDiffer>false</organismsDiffer>
    <experiments>5</experiments>
</comment>
<comment type="interaction">
    <interactant intactId="EBI-740160">
        <id>Q9NP79</id>
    </interactant>
    <interactant intactId="EBI-747736">
        <id>Q15561</id>
        <label>TEAD4</label>
    </interactant>
    <organismsDiffer>false</organismsDiffer>
    <experiments>4</experiments>
</comment>
<comment type="interaction">
    <interactant intactId="EBI-740160">
        <id>Q9NP79</id>
    </interactant>
    <interactant intactId="EBI-711925">
        <id>Q05516</id>
        <label>ZBTB16</label>
    </interactant>
    <organismsDiffer>false</organismsDiffer>
    <experiments>4</experiments>
</comment>
<comment type="subcellular location">
    <subcellularLocation>
        <location evidence="3">Cytoplasm</location>
    </subcellularLocation>
    <subcellularLocation>
        <location evidence="12">Endosome membrane</location>
        <topology evidence="12">Peripheral membrane protein</topology>
    </subcellularLocation>
</comment>
<comment type="alternative products">
    <event type="alternative splicing"/>
    <isoform>
        <id>Q9NP79-1</id>
        <name>1</name>
        <sequence type="displayed"/>
    </isoform>
    <isoform>
        <id>Q9NP79-2</id>
        <name>2</name>
        <sequence type="described" ref="VSP_056727 VSP_056728"/>
    </isoform>
</comment>
<comment type="similarity">
    <text evidence="11">Belongs to the VTA1 family.</text>
</comment>
<comment type="sequence caution" evidence="11">
    <conflict type="frameshift">
        <sequence resource="EMBL-CDS" id="AAF36148"/>
    </conflict>
</comment>
<comment type="sequence caution" evidence="11">
    <conflict type="frameshift">
        <sequence resource="EMBL-CDS" id="AAG43125"/>
    </conflict>
</comment>
<name>VTA1_HUMAN</name>
<dbReference type="EMBL" id="AF271994">
    <property type="protein sequence ID" value="AAF76210.1"/>
    <property type="molecule type" value="mRNA"/>
</dbReference>
<dbReference type="EMBL" id="AF060225">
    <property type="protein sequence ID" value="AAG43125.1"/>
    <property type="status" value="ALT_FRAME"/>
    <property type="molecule type" value="mRNA"/>
</dbReference>
<dbReference type="EMBL" id="AF151062">
    <property type="protein sequence ID" value="AAF36148.1"/>
    <property type="status" value="ALT_FRAME"/>
    <property type="molecule type" value="mRNA"/>
</dbReference>
<dbReference type="EMBL" id="AL136684">
    <property type="protein sequence ID" value="CAB66619.1"/>
    <property type="molecule type" value="mRNA"/>
</dbReference>
<dbReference type="EMBL" id="AK000051">
    <property type="protein sequence ID" value="BAA90909.1"/>
    <property type="molecule type" value="mRNA"/>
</dbReference>
<dbReference type="EMBL" id="AK301376">
    <property type="protein sequence ID" value="BAG62917.1"/>
    <property type="molecule type" value="mRNA"/>
</dbReference>
<dbReference type="EMBL" id="CR457207">
    <property type="protein sequence ID" value="CAG33488.1"/>
    <property type="molecule type" value="mRNA"/>
</dbReference>
<dbReference type="EMBL" id="AL033522">
    <property type="status" value="NOT_ANNOTATED_CDS"/>
    <property type="molecule type" value="Genomic_DNA"/>
</dbReference>
<dbReference type="EMBL" id="CH471051">
    <property type="protein sequence ID" value="EAW47883.1"/>
    <property type="molecule type" value="Genomic_DNA"/>
</dbReference>
<dbReference type="EMBL" id="CH471051">
    <property type="protein sequence ID" value="EAW47885.1"/>
    <property type="molecule type" value="Genomic_DNA"/>
</dbReference>
<dbReference type="EMBL" id="BC005937">
    <property type="protein sequence ID" value="AAH05937.1"/>
    <property type="molecule type" value="mRNA"/>
</dbReference>
<dbReference type="EMBL" id="BC006989">
    <property type="protein sequence ID" value="AAH06989.1"/>
    <property type="molecule type" value="mRNA"/>
</dbReference>
<dbReference type="EMBL" id="BC022536">
    <property type="protein sequence ID" value="AAH22536.1"/>
    <property type="molecule type" value="mRNA"/>
</dbReference>
<dbReference type="CCDS" id="CCDS5197.1">
    <molecule id="Q9NP79-1"/>
</dbReference>
<dbReference type="CCDS" id="CCDS69214.1">
    <molecule id="Q9NP79-2"/>
</dbReference>
<dbReference type="RefSeq" id="NP_001273300.1">
    <property type="nucleotide sequence ID" value="NM_001286371.1"/>
</dbReference>
<dbReference type="RefSeq" id="NP_001273301.1">
    <molecule id="Q9NP79-2"/>
    <property type="nucleotide sequence ID" value="NM_001286372.2"/>
</dbReference>
<dbReference type="RefSeq" id="NP_057569.2">
    <molecule id="Q9NP79-1"/>
    <property type="nucleotide sequence ID" value="NM_016485.4"/>
</dbReference>
<dbReference type="PDB" id="2LXL">
    <property type="method" value="NMR"/>
    <property type="chains" value="A=1-183"/>
</dbReference>
<dbReference type="PDB" id="2LXM">
    <property type="method" value="NMR"/>
    <property type="chains" value="A=1-168"/>
</dbReference>
<dbReference type="PDB" id="4TXP">
    <property type="method" value="X-ray"/>
    <property type="resolution" value="3.01 A"/>
    <property type="chains" value="A/B/C=1-162"/>
</dbReference>
<dbReference type="PDB" id="4TXQ">
    <property type="method" value="X-ray"/>
    <property type="resolution" value="2.21 A"/>
    <property type="chains" value="A/B=1-162"/>
</dbReference>
<dbReference type="PDB" id="4TXR">
    <property type="method" value="X-ray"/>
    <property type="resolution" value="1.00 A"/>
    <property type="chains" value="A=1-162"/>
</dbReference>
<dbReference type="PDB" id="4U7E">
    <property type="method" value="X-ray"/>
    <property type="resolution" value="1.60 A"/>
    <property type="chains" value="B=1-162"/>
</dbReference>
<dbReference type="PDBsum" id="2LXL"/>
<dbReference type="PDBsum" id="2LXM"/>
<dbReference type="PDBsum" id="4TXP"/>
<dbReference type="PDBsum" id="4TXQ"/>
<dbReference type="PDBsum" id="4TXR"/>
<dbReference type="PDBsum" id="4U7E"/>
<dbReference type="BMRB" id="Q9NP79"/>
<dbReference type="SMR" id="Q9NP79"/>
<dbReference type="BioGRID" id="119595">
    <property type="interactions" value="147"/>
</dbReference>
<dbReference type="FunCoup" id="Q9NP79">
    <property type="interactions" value="4435"/>
</dbReference>
<dbReference type="IntAct" id="Q9NP79">
    <property type="interactions" value="59"/>
</dbReference>
<dbReference type="MINT" id="Q9NP79"/>
<dbReference type="STRING" id="9606.ENSP00000356602"/>
<dbReference type="GlyCosmos" id="Q9NP79">
    <property type="glycosylation" value="1 site, 1 glycan"/>
</dbReference>
<dbReference type="GlyGen" id="Q9NP79">
    <property type="glycosylation" value="2 sites, 1 O-linked glycan (1 site)"/>
</dbReference>
<dbReference type="iPTMnet" id="Q9NP79"/>
<dbReference type="MetOSite" id="Q9NP79"/>
<dbReference type="PhosphoSitePlus" id="Q9NP79"/>
<dbReference type="SwissPalm" id="Q9NP79"/>
<dbReference type="BioMuta" id="VTA1"/>
<dbReference type="DMDM" id="30580379"/>
<dbReference type="jPOST" id="Q9NP79"/>
<dbReference type="MassIVE" id="Q9NP79"/>
<dbReference type="PaxDb" id="9606-ENSP00000356602"/>
<dbReference type="PeptideAtlas" id="Q9NP79"/>
<dbReference type="ProteomicsDB" id="18265"/>
<dbReference type="ProteomicsDB" id="81922">
    <molecule id="Q9NP79-1"/>
</dbReference>
<dbReference type="Pumba" id="Q9NP79"/>
<dbReference type="Antibodypedia" id="33094">
    <property type="antibodies" value="133 antibodies from 23 providers"/>
</dbReference>
<dbReference type="DNASU" id="51534"/>
<dbReference type="Ensembl" id="ENST00000367630.9">
    <molecule id="Q9NP79-1"/>
    <property type="protein sequence ID" value="ENSP00000356602.3"/>
    <property type="gene ID" value="ENSG00000009844.16"/>
</dbReference>
<dbReference type="Ensembl" id="ENST00000452973.6">
    <molecule id="Q9NP79-2"/>
    <property type="protein sequence ID" value="ENSP00000395767.2"/>
    <property type="gene ID" value="ENSG00000009844.16"/>
</dbReference>
<dbReference type="GeneID" id="51534"/>
<dbReference type="KEGG" id="hsa:51534"/>
<dbReference type="MANE-Select" id="ENST00000367630.9">
    <property type="protein sequence ID" value="ENSP00000356602.3"/>
    <property type="RefSeq nucleotide sequence ID" value="NM_016485.5"/>
    <property type="RefSeq protein sequence ID" value="NP_057569.2"/>
</dbReference>
<dbReference type="UCSC" id="uc003qiw.5">
    <molecule id="Q9NP79-1"/>
    <property type="organism name" value="human"/>
</dbReference>
<dbReference type="AGR" id="HGNC:20954"/>
<dbReference type="CTD" id="51534"/>
<dbReference type="DisGeNET" id="51534"/>
<dbReference type="GeneCards" id="VTA1"/>
<dbReference type="HGNC" id="HGNC:20954">
    <property type="gene designation" value="VTA1"/>
</dbReference>
<dbReference type="HPA" id="ENSG00000009844">
    <property type="expression patterns" value="Low tissue specificity"/>
</dbReference>
<dbReference type="MIM" id="610902">
    <property type="type" value="gene"/>
</dbReference>
<dbReference type="neXtProt" id="NX_Q9NP79"/>
<dbReference type="OpenTargets" id="ENSG00000009844"/>
<dbReference type="PharmGKB" id="PA162408932"/>
<dbReference type="VEuPathDB" id="HostDB:ENSG00000009844"/>
<dbReference type="eggNOG" id="KOG0917">
    <property type="taxonomic scope" value="Eukaryota"/>
</dbReference>
<dbReference type="GeneTree" id="ENSGT00390000011342"/>
<dbReference type="HOGENOM" id="CLU_030378_1_1_1"/>
<dbReference type="InParanoid" id="Q9NP79"/>
<dbReference type="OMA" id="AYWCEYH"/>
<dbReference type="OrthoDB" id="391137at2759"/>
<dbReference type="PAN-GO" id="Q9NP79">
    <property type="GO annotations" value="2 GO annotations based on evolutionary models"/>
</dbReference>
<dbReference type="PhylomeDB" id="Q9NP79"/>
<dbReference type="TreeFam" id="TF105917"/>
<dbReference type="PathwayCommons" id="Q9NP79"/>
<dbReference type="Reactome" id="R-HSA-162588">
    <property type="pathway name" value="Budding and maturation of HIV virion"/>
</dbReference>
<dbReference type="Reactome" id="R-HSA-917729">
    <property type="pathway name" value="Endosomal Sorting Complex Required For Transport (ESCRT)"/>
</dbReference>
<dbReference type="SignaLink" id="Q9NP79"/>
<dbReference type="BioGRID-ORCS" id="51534">
    <property type="hits" value="43 hits in 1163 CRISPR screens"/>
</dbReference>
<dbReference type="CD-CODE" id="FB4E32DD">
    <property type="entry name" value="Presynaptic clusters and postsynaptic densities"/>
</dbReference>
<dbReference type="ChiTaRS" id="VTA1">
    <property type="organism name" value="human"/>
</dbReference>
<dbReference type="EvolutionaryTrace" id="Q9NP79"/>
<dbReference type="GeneWiki" id="VTA1"/>
<dbReference type="GenomeRNAi" id="51534"/>
<dbReference type="Pharos" id="Q9NP79">
    <property type="development level" value="Tbio"/>
</dbReference>
<dbReference type="PRO" id="PR:Q9NP79"/>
<dbReference type="Proteomes" id="UP000005640">
    <property type="component" value="Chromosome 6"/>
</dbReference>
<dbReference type="RNAct" id="Q9NP79">
    <property type="molecule type" value="protein"/>
</dbReference>
<dbReference type="Bgee" id="ENSG00000009844">
    <property type="expression patterns" value="Expressed in cortical plate and 193 other cell types or tissues"/>
</dbReference>
<dbReference type="ExpressionAtlas" id="Q9NP79">
    <property type="expression patterns" value="baseline and differential"/>
</dbReference>
<dbReference type="GO" id="GO:0005829">
    <property type="term" value="C:cytosol"/>
    <property type="evidence" value="ECO:0000314"/>
    <property type="project" value="HPA"/>
</dbReference>
<dbReference type="GO" id="GO:0010008">
    <property type="term" value="C:endosome membrane"/>
    <property type="evidence" value="ECO:0007669"/>
    <property type="project" value="UniProtKB-SubCell"/>
</dbReference>
<dbReference type="GO" id="GO:0070062">
    <property type="term" value="C:extracellular exosome"/>
    <property type="evidence" value="ECO:0007005"/>
    <property type="project" value="UniProtKB"/>
</dbReference>
<dbReference type="GO" id="GO:0043231">
    <property type="term" value="C:intracellular membrane-bounded organelle"/>
    <property type="evidence" value="ECO:0000314"/>
    <property type="project" value="HPA"/>
</dbReference>
<dbReference type="GO" id="GO:0005771">
    <property type="term" value="C:multivesicular body"/>
    <property type="evidence" value="ECO:0000318"/>
    <property type="project" value="GO_Central"/>
</dbReference>
<dbReference type="GO" id="GO:0005654">
    <property type="term" value="C:nucleoplasm"/>
    <property type="evidence" value="ECO:0000314"/>
    <property type="project" value="HPA"/>
</dbReference>
<dbReference type="GO" id="GO:1904903">
    <property type="term" value="P:ESCRT III complex disassembly"/>
    <property type="evidence" value="ECO:0000303"/>
    <property type="project" value="ParkinsonsUK-UCL"/>
</dbReference>
<dbReference type="GO" id="GO:0032511">
    <property type="term" value="P:late endosome to vacuole transport via multivesicular body sorting pathway"/>
    <property type="evidence" value="ECO:0000318"/>
    <property type="project" value="GO_Central"/>
</dbReference>
<dbReference type="GO" id="GO:0016236">
    <property type="term" value="P:macroautophagy"/>
    <property type="evidence" value="ECO:0000303"/>
    <property type="project" value="ParkinsonsUK-UCL"/>
</dbReference>
<dbReference type="GO" id="GO:0036258">
    <property type="term" value="P:multivesicular body assembly"/>
    <property type="evidence" value="ECO:0000303"/>
    <property type="project" value="ParkinsonsUK-UCL"/>
</dbReference>
<dbReference type="GO" id="GO:0071985">
    <property type="term" value="P:multivesicular body sorting pathway"/>
    <property type="evidence" value="ECO:0000315"/>
    <property type="project" value="UniProtKB"/>
</dbReference>
<dbReference type="GO" id="GO:0015031">
    <property type="term" value="P:protein transport"/>
    <property type="evidence" value="ECO:0007669"/>
    <property type="project" value="UniProtKB-KW"/>
</dbReference>
<dbReference type="FunFam" id="1.20.5.420:FF:000001">
    <property type="entry name" value="Vacuolar protein sorting-associated protein VTA1 homolog"/>
    <property type="match status" value="1"/>
</dbReference>
<dbReference type="FunFam" id="1.25.40.270:FF:000001">
    <property type="entry name" value="vacuolar protein sorting-associated protein VTA1 homolog"/>
    <property type="match status" value="1"/>
</dbReference>
<dbReference type="Gene3D" id="1.20.5.420">
    <property type="entry name" value="Immunoglobulin FC, subunit C"/>
    <property type="match status" value="1"/>
</dbReference>
<dbReference type="Gene3D" id="1.25.40.270">
    <property type="entry name" value="Vacuolar protein sorting-associated protein vta1"/>
    <property type="match status" value="1"/>
</dbReference>
<dbReference type="InterPro" id="IPR044538">
    <property type="entry name" value="Vta1-like"/>
</dbReference>
<dbReference type="InterPro" id="IPR039431">
    <property type="entry name" value="Vta1/CALS_N"/>
</dbReference>
<dbReference type="InterPro" id="IPR023175">
    <property type="entry name" value="Vta1/CALS_N_sf"/>
</dbReference>
<dbReference type="InterPro" id="IPR041212">
    <property type="entry name" value="Vta1_C"/>
</dbReference>
<dbReference type="PANTHER" id="PTHR46009">
    <property type="entry name" value="VACUOLAR PROTEIN SORTING-ASSOCIATED PROTEIN VTA1 HOMOLOG"/>
    <property type="match status" value="1"/>
</dbReference>
<dbReference type="PANTHER" id="PTHR46009:SF1">
    <property type="entry name" value="VACUOLAR PROTEIN SORTING-ASSOCIATED PROTEIN VTA1 HOMOLOG"/>
    <property type="match status" value="1"/>
</dbReference>
<dbReference type="Pfam" id="PF04652">
    <property type="entry name" value="Vta1"/>
    <property type="match status" value="1"/>
</dbReference>
<dbReference type="Pfam" id="PF18097">
    <property type="entry name" value="Vta1_C"/>
    <property type="match status" value="1"/>
</dbReference>
<sequence>MAALAPLPPLPAQFKSIQHHLRTAQEHDKRDPVVAYYCRLYAMQTGMKIDSKTPECRKFLSKLMDQLEALKKQLGDNEAITQEIVGCAHLENYALKMFLYADNEDRAGRFHKNMIKSFYTASLLIDVITVFGELTDENVKHRKYARWKATYIHNCLKNGETPQAGPVGIEEDNDIEENEDAGAASLPTQPTQPSSSSTYDPSNMPSGNYTGIQIPPGAHAPANTPAEVPHSTGVASNTIQPTPQTIPAIDPALFNTISQGDVRLTPEDFARAQKYCKYAGSALQYEDVSTAVQNLQKALKLLTTGRE</sequence>
<organism>
    <name type="scientific">Homo sapiens</name>
    <name type="common">Human</name>
    <dbReference type="NCBI Taxonomy" id="9606"/>
    <lineage>
        <taxon>Eukaryota</taxon>
        <taxon>Metazoa</taxon>
        <taxon>Chordata</taxon>
        <taxon>Craniata</taxon>
        <taxon>Vertebrata</taxon>
        <taxon>Euteleostomi</taxon>
        <taxon>Mammalia</taxon>
        <taxon>Eutheria</taxon>
        <taxon>Euarchontoglires</taxon>
        <taxon>Primates</taxon>
        <taxon>Haplorrhini</taxon>
        <taxon>Catarrhini</taxon>
        <taxon>Hominidae</taxon>
        <taxon>Homo</taxon>
    </lineage>
</organism>